<name>EFTU_BUCA5</name>
<gene>
    <name evidence="2" type="primary">tuf</name>
    <name type="ordered locus">BUAP5A_519</name>
</gene>
<comment type="function">
    <text evidence="2">GTP hydrolase that promotes the GTP-dependent binding of aminoacyl-tRNA to the A-site of ribosomes during protein biosynthesis.</text>
</comment>
<comment type="catalytic activity">
    <reaction evidence="2">
        <text>GTP + H2O = GDP + phosphate + H(+)</text>
        <dbReference type="Rhea" id="RHEA:19669"/>
        <dbReference type="ChEBI" id="CHEBI:15377"/>
        <dbReference type="ChEBI" id="CHEBI:15378"/>
        <dbReference type="ChEBI" id="CHEBI:37565"/>
        <dbReference type="ChEBI" id="CHEBI:43474"/>
        <dbReference type="ChEBI" id="CHEBI:58189"/>
        <dbReference type="EC" id="3.6.5.3"/>
    </reaction>
    <physiologicalReaction direction="left-to-right" evidence="2">
        <dbReference type="Rhea" id="RHEA:19670"/>
    </physiologicalReaction>
</comment>
<comment type="subunit">
    <text evidence="2">Monomer.</text>
</comment>
<comment type="subcellular location">
    <subcellularLocation>
        <location evidence="2">Cytoplasm</location>
    </subcellularLocation>
</comment>
<comment type="similarity">
    <text evidence="2">Belongs to the TRAFAC class translation factor GTPase superfamily. Classic translation factor GTPase family. EF-Tu/EF-1A subfamily.</text>
</comment>
<dbReference type="EC" id="3.6.5.3" evidence="2"/>
<dbReference type="EMBL" id="CP001161">
    <property type="protein sequence ID" value="ACL30870.1"/>
    <property type="molecule type" value="Genomic_DNA"/>
</dbReference>
<dbReference type="RefSeq" id="WP_009874477.1">
    <property type="nucleotide sequence ID" value="NC_011833.1"/>
</dbReference>
<dbReference type="SMR" id="B8D9U9"/>
<dbReference type="KEGG" id="bap:BUAP5A_519"/>
<dbReference type="HOGENOM" id="CLU_007265_0_2_6"/>
<dbReference type="OrthoDB" id="9803139at2"/>
<dbReference type="Proteomes" id="UP000006904">
    <property type="component" value="Chromosome"/>
</dbReference>
<dbReference type="GO" id="GO:0005829">
    <property type="term" value="C:cytosol"/>
    <property type="evidence" value="ECO:0007669"/>
    <property type="project" value="TreeGrafter"/>
</dbReference>
<dbReference type="GO" id="GO:0005525">
    <property type="term" value="F:GTP binding"/>
    <property type="evidence" value="ECO:0007669"/>
    <property type="project" value="UniProtKB-UniRule"/>
</dbReference>
<dbReference type="GO" id="GO:0003924">
    <property type="term" value="F:GTPase activity"/>
    <property type="evidence" value="ECO:0007669"/>
    <property type="project" value="InterPro"/>
</dbReference>
<dbReference type="GO" id="GO:0097216">
    <property type="term" value="F:guanosine tetraphosphate binding"/>
    <property type="evidence" value="ECO:0007669"/>
    <property type="project" value="UniProtKB-ARBA"/>
</dbReference>
<dbReference type="GO" id="GO:0003746">
    <property type="term" value="F:translation elongation factor activity"/>
    <property type="evidence" value="ECO:0007669"/>
    <property type="project" value="UniProtKB-UniRule"/>
</dbReference>
<dbReference type="CDD" id="cd01884">
    <property type="entry name" value="EF_Tu"/>
    <property type="match status" value="1"/>
</dbReference>
<dbReference type="CDD" id="cd03697">
    <property type="entry name" value="EFTU_II"/>
    <property type="match status" value="1"/>
</dbReference>
<dbReference type="CDD" id="cd03707">
    <property type="entry name" value="EFTU_III"/>
    <property type="match status" value="1"/>
</dbReference>
<dbReference type="FunFam" id="2.40.30.10:FF:000001">
    <property type="entry name" value="Elongation factor Tu"/>
    <property type="match status" value="1"/>
</dbReference>
<dbReference type="FunFam" id="3.40.50.300:FF:000003">
    <property type="entry name" value="Elongation factor Tu"/>
    <property type="match status" value="1"/>
</dbReference>
<dbReference type="Gene3D" id="3.40.50.300">
    <property type="entry name" value="P-loop containing nucleotide triphosphate hydrolases"/>
    <property type="match status" value="1"/>
</dbReference>
<dbReference type="Gene3D" id="2.40.30.10">
    <property type="entry name" value="Translation factors"/>
    <property type="match status" value="2"/>
</dbReference>
<dbReference type="HAMAP" id="MF_00118_B">
    <property type="entry name" value="EF_Tu_B"/>
    <property type="match status" value="1"/>
</dbReference>
<dbReference type="InterPro" id="IPR041709">
    <property type="entry name" value="EF-Tu_GTP-bd"/>
</dbReference>
<dbReference type="InterPro" id="IPR050055">
    <property type="entry name" value="EF-Tu_GTPase"/>
</dbReference>
<dbReference type="InterPro" id="IPR004161">
    <property type="entry name" value="EFTu-like_2"/>
</dbReference>
<dbReference type="InterPro" id="IPR033720">
    <property type="entry name" value="EFTU_2"/>
</dbReference>
<dbReference type="InterPro" id="IPR031157">
    <property type="entry name" value="G_TR_CS"/>
</dbReference>
<dbReference type="InterPro" id="IPR027417">
    <property type="entry name" value="P-loop_NTPase"/>
</dbReference>
<dbReference type="InterPro" id="IPR005225">
    <property type="entry name" value="Small_GTP-bd"/>
</dbReference>
<dbReference type="InterPro" id="IPR000795">
    <property type="entry name" value="T_Tr_GTP-bd_dom"/>
</dbReference>
<dbReference type="InterPro" id="IPR009000">
    <property type="entry name" value="Transl_B-barrel_sf"/>
</dbReference>
<dbReference type="InterPro" id="IPR009001">
    <property type="entry name" value="Transl_elong_EF1A/Init_IF2_C"/>
</dbReference>
<dbReference type="InterPro" id="IPR004541">
    <property type="entry name" value="Transl_elong_EFTu/EF1A_bac/org"/>
</dbReference>
<dbReference type="InterPro" id="IPR004160">
    <property type="entry name" value="Transl_elong_EFTu/EF1A_C"/>
</dbReference>
<dbReference type="NCBIfam" id="TIGR00485">
    <property type="entry name" value="EF-Tu"/>
    <property type="match status" value="1"/>
</dbReference>
<dbReference type="NCBIfam" id="NF000766">
    <property type="entry name" value="PRK00049.1"/>
    <property type="match status" value="1"/>
</dbReference>
<dbReference type="NCBIfam" id="NF009372">
    <property type="entry name" value="PRK12735.1"/>
    <property type="match status" value="1"/>
</dbReference>
<dbReference type="NCBIfam" id="NF009373">
    <property type="entry name" value="PRK12736.1"/>
    <property type="match status" value="1"/>
</dbReference>
<dbReference type="NCBIfam" id="TIGR00231">
    <property type="entry name" value="small_GTP"/>
    <property type="match status" value="1"/>
</dbReference>
<dbReference type="PANTHER" id="PTHR43721:SF22">
    <property type="entry name" value="ELONGATION FACTOR TU, MITOCHONDRIAL"/>
    <property type="match status" value="1"/>
</dbReference>
<dbReference type="PANTHER" id="PTHR43721">
    <property type="entry name" value="ELONGATION FACTOR TU-RELATED"/>
    <property type="match status" value="1"/>
</dbReference>
<dbReference type="Pfam" id="PF00009">
    <property type="entry name" value="GTP_EFTU"/>
    <property type="match status" value="1"/>
</dbReference>
<dbReference type="Pfam" id="PF03144">
    <property type="entry name" value="GTP_EFTU_D2"/>
    <property type="match status" value="1"/>
</dbReference>
<dbReference type="Pfam" id="PF03143">
    <property type="entry name" value="GTP_EFTU_D3"/>
    <property type="match status" value="1"/>
</dbReference>
<dbReference type="PRINTS" id="PR00315">
    <property type="entry name" value="ELONGATNFCT"/>
</dbReference>
<dbReference type="SUPFAM" id="SSF50465">
    <property type="entry name" value="EF-Tu/eEF-1alpha/eIF2-gamma C-terminal domain"/>
    <property type="match status" value="1"/>
</dbReference>
<dbReference type="SUPFAM" id="SSF52540">
    <property type="entry name" value="P-loop containing nucleoside triphosphate hydrolases"/>
    <property type="match status" value="1"/>
</dbReference>
<dbReference type="SUPFAM" id="SSF50447">
    <property type="entry name" value="Translation proteins"/>
    <property type="match status" value="1"/>
</dbReference>
<dbReference type="PROSITE" id="PS00301">
    <property type="entry name" value="G_TR_1"/>
    <property type="match status" value="1"/>
</dbReference>
<dbReference type="PROSITE" id="PS51722">
    <property type="entry name" value="G_TR_2"/>
    <property type="match status" value="1"/>
</dbReference>
<organism>
    <name type="scientific">Buchnera aphidicola subsp. Acyrthosiphon pisum (strain 5A)</name>
    <dbReference type="NCBI Taxonomy" id="563178"/>
    <lineage>
        <taxon>Bacteria</taxon>
        <taxon>Pseudomonadati</taxon>
        <taxon>Pseudomonadota</taxon>
        <taxon>Gammaproteobacteria</taxon>
        <taxon>Enterobacterales</taxon>
        <taxon>Erwiniaceae</taxon>
        <taxon>Buchnera</taxon>
    </lineage>
</organism>
<keyword id="KW-0963">Cytoplasm</keyword>
<keyword id="KW-0251">Elongation factor</keyword>
<keyword id="KW-0342">GTP-binding</keyword>
<keyword id="KW-0378">Hydrolase</keyword>
<keyword id="KW-0460">Magnesium</keyword>
<keyword id="KW-0479">Metal-binding</keyword>
<keyword id="KW-0547">Nucleotide-binding</keyword>
<keyword id="KW-0648">Protein biosynthesis</keyword>
<accession>B8D9U9</accession>
<reference key="1">
    <citation type="journal article" date="2009" name="Science">
        <title>The dynamics and time scale of ongoing genomic erosion in symbiotic bacteria.</title>
        <authorList>
            <person name="Moran N.A."/>
            <person name="McLaughlin H.J."/>
            <person name="Sorek R."/>
        </authorList>
    </citation>
    <scope>NUCLEOTIDE SEQUENCE [LARGE SCALE GENOMIC DNA]</scope>
    <source>
        <strain>5A</strain>
    </source>
</reference>
<proteinExistence type="inferred from homology"/>
<evidence type="ECO:0000250" key="1"/>
<evidence type="ECO:0000255" key="2">
    <source>
        <dbReference type="HAMAP-Rule" id="MF_00118"/>
    </source>
</evidence>
<sequence>MSKEKFQRLKPHINVGTIGHVDHGKTTLTAAITTVLSKKFGGSARAFDQIDNAPEEKARGITINTSHVEYDTEFRHYAHVDCPGHADYIKNMITGAAQMDGAILVVAATDGPMPQTREHILLGRQVGVPYIIVFLNKCDMVDDEELLELVEMEVRDLLTQYDFPGDDTPIIRGSALKALEGDPEWESKIIDLSKFLDSYIPEPKRAVDQPFLLPIEDVFSISGRGTVVTGRVEKGIIKVGEEVEIVGIKKTTKTTCTGVEMFRKLLDEGRAGENVGVLLRGTKRDEIERGQVLAKPGSIHPHTTFESEVYVLSKEEGGRHTPFFKGYRPQFYFRTTDVTGSIELPEGIEMVMPGDNIKMTVTLINPIAMADGLRFAIREGGRTVGAGVVSKVLL</sequence>
<protein>
    <recommendedName>
        <fullName evidence="2">Elongation factor Tu</fullName>
        <shortName evidence="2">EF-Tu</shortName>
        <ecNumber evidence="2">3.6.5.3</ecNumber>
    </recommendedName>
</protein>
<feature type="chain" id="PRO_1000201393" description="Elongation factor Tu">
    <location>
        <begin position="1"/>
        <end position="394"/>
    </location>
</feature>
<feature type="domain" description="tr-type G">
    <location>
        <begin position="10"/>
        <end position="204"/>
    </location>
</feature>
<feature type="region of interest" description="G1" evidence="1">
    <location>
        <begin position="19"/>
        <end position="26"/>
    </location>
</feature>
<feature type="region of interest" description="G2" evidence="1">
    <location>
        <begin position="60"/>
        <end position="64"/>
    </location>
</feature>
<feature type="region of interest" description="G3" evidence="1">
    <location>
        <begin position="81"/>
        <end position="84"/>
    </location>
</feature>
<feature type="region of interest" description="G4" evidence="1">
    <location>
        <begin position="136"/>
        <end position="139"/>
    </location>
</feature>
<feature type="region of interest" description="G5" evidence="1">
    <location>
        <begin position="174"/>
        <end position="176"/>
    </location>
</feature>
<feature type="binding site" evidence="2">
    <location>
        <begin position="19"/>
        <end position="26"/>
    </location>
    <ligand>
        <name>GTP</name>
        <dbReference type="ChEBI" id="CHEBI:37565"/>
    </ligand>
</feature>
<feature type="binding site" evidence="2">
    <location>
        <position position="26"/>
    </location>
    <ligand>
        <name>Mg(2+)</name>
        <dbReference type="ChEBI" id="CHEBI:18420"/>
    </ligand>
</feature>
<feature type="binding site" evidence="2">
    <location>
        <begin position="81"/>
        <end position="85"/>
    </location>
    <ligand>
        <name>GTP</name>
        <dbReference type="ChEBI" id="CHEBI:37565"/>
    </ligand>
</feature>
<feature type="binding site" evidence="2">
    <location>
        <begin position="136"/>
        <end position="139"/>
    </location>
    <ligand>
        <name>GTP</name>
        <dbReference type="ChEBI" id="CHEBI:37565"/>
    </ligand>
</feature>